<dbReference type="EMBL" id="U39941">
    <property type="protein sequence ID" value="AAB68972.1"/>
    <property type="molecule type" value="Genomic_DNA"/>
</dbReference>
<dbReference type="EMBL" id="U95165">
    <property type="protein sequence ID" value="AAB71794.1"/>
    <property type="molecule type" value="Genomic_DNA"/>
</dbReference>
<dbReference type="EMBL" id="AE007869">
    <property type="protein sequence ID" value="AAK86360.1"/>
    <property type="molecule type" value="Genomic_DNA"/>
</dbReference>
<dbReference type="PIR" id="AG2643">
    <property type="entry name" value="AG2643"/>
</dbReference>
<dbReference type="PIR" id="G97425">
    <property type="entry name" value="G97425"/>
</dbReference>
<dbReference type="RefSeq" id="NP_353575.1">
    <property type="nucleotide sequence ID" value="NC_003062.2"/>
</dbReference>
<dbReference type="RefSeq" id="WP_006313011.1">
    <property type="nucleotide sequence ID" value="NC_003062.2"/>
</dbReference>
<dbReference type="SMR" id="Q44342"/>
<dbReference type="STRING" id="176299.Atu0548"/>
<dbReference type="EnsemblBacteria" id="AAK86360">
    <property type="protein sequence ID" value="AAK86360"/>
    <property type="gene ID" value="Atu0548"/>
</dbReference>
<dbReference type="GeneID" id="1132586"/>
<dbReference type="KEGG" id="atu:Atu0548"/>
<dbReference type="PATRIC" id="fig|176299.10.peg.544"/>
<dbReference type="eggNOG" id="COG2063">
    <property type="taxonomic scope" value="Bacteria"/>
</dbReference>
<dbReference type="HOGENOM" id="CLU_069313_1_2_5"/>
<dbReference type="OrthoDB" id="9789227at2"/>
<dbReference type="PhylomeDB" id="Q44342"/>
<dbReference type="BioCyc" id="AGRO:ATU0548-MONOMER"/>
<dbReference type="Proteomes" id="UP000000813">
    <property type="component" value="Chromosome circular"/>
</dbReference>
<dbReference type="GO" id="GO:0009425">
    <property type="term" value="C:bacterial-type flagellum basal body"/>
    <property type="evidence" value="ECO:0000303"/>
    <property type="project" value="PAMGO_GAT"/>
</dbReference>
<dbReference type="GO" id="GO:0009427">
    <property type="term" value="C:bacterial-type flagellum basal body, distal rod, L ring"/>
    <property type="evidence" value="ECO:0007669"/>
    <property type="project" value="InterPro"/>
</dbReference>
<dbReference type="GO" id="GO:0009279">
    <property type="term" value="C:cell outer membrane"/>
    <property type="evidence" value="ECO:0007669"/>
    <property type="project" value="UniProtKB-SubCell"/>
</dbReference>
<dbReference type="GO" id="GO:0003774">
    <property type="term" value="F:cytoskeletal motor activity"/>
    <property type="evidence" value="ECO:0007669"/>
    <property type="project" value="InterPro"/>
</dbReference>
<dbReference type="GO" id="GO:0071973">
    <property type="term" value="P:bacterial-type flagellum-dependent cell motility"/>
    <property type="evidence" value="ECO:0007669"/>
    <property type="project" value="InterPro"/>
</dbReference>
<dbReference type="HAMAP" id="MF_00415">
    <property type="entry name" value="FlgH"/>
    <property type="match status" value="1"/>
</dbReference>
<dbReference type="InterPro" id="IPR000527">
    <property type="entry name" value="Flag_Lring"/>
</dbReference>
<dbReference type="NCBIfam" id="NF001305">
    <property type="entry name" value="PRK00249.1-5"/>
    <property type="match status" value="1"/>
</dbReference>
<dbReference type="PANTHER" id="PTHR34933">
    <property type="entry name" value="FLAGELLAR L-RING PROTEIN"/>
    <property type="match status" value="1"/>
</dbReference>
<dbReference type="PANTHER" id="PTHR34933:SF1">
    <property type="entry name" value="FLAGELLAR L-RING PROTEIN"/>
    <property type="match status" value="1"/>
</dbReference>
<dbReference type="Pfam" id="PF02107">
    <property type="entry name" value="FlgH"/>
    <property type="match status" value="1"/>
</dbReference>
<dbReference type="PRINTS" id="PR01008">
    <property type="entry name" value="FLGLRINGFLGH"/>
</dbReference>
<dbReference type="PROSITE" id="PS51257">
    <property type="entry name" value="PROKAR_LIPOPROTEIN"/>
    <property type="match status" value="1"/>
</dbReference>
<name>FLGH_AGRFC</name>
<gene>
    <name type="primary">flgH</name>
    <name type="ordered locus">Atu0548</name>
    <name type="ORF">AGR_C_967</name>
</gene>
<proteinExistence type="inferred from homology"/>
<evidence type="ECO:0000250" key="1"/>
<evidence type="ECO:0000255" key="2"/>
<evidence type="ECO:0000305" key="3"/>
<comment type="function">
    <text>Assembles around the rod to form the L-ring and probably protects the motor/basal body from shearing forces during rotation.</text>
</comment>
<comment type="subunit">
    <text evidence="1">The basal body constitutes a major portion of the flagellar organelle and consists of four rings (L,P,S, and M) mounted on a central rod.</text>
</comment>
<comment type="subcellular location">
    <subcellularLocation>
        <location evidence="3">Cell outer membrane</location>
        <topology evidence="3">Lipid-anchor</topology>
    </subcellularLocation>
    <subcellularLocation>
        <location>Bacterial flagellum basal body</location>
    </subcellularLocation>
</comment>
<comment type="similarity">
    <text evidence="3">Belongs to the FlgH family.</text>
</comment>
<reference key="1">
    <citation type="journal article" date="1997" name="Gene">
        <title>Isolation and characterisation of a linked cluster of genes from Agrobacterium tumefaciens encoding proteins involved in flagellar basal-body structure.</title>
        <authorList>
            <person name="Deakin W.J."/>
            <person name="Furniss C.S."/>
            <person name="Parker V.E."/>
            <person name="Shaw C.H."/>
        </authorList>
    </citation>
    <scope>NUCLEOTIDE SEQUENCE [GENOMIC DNA]</scope>
</reference>
<reference key="2">
    <citation type="journal article" date="2001" name="Science">
        <title>The genome of the natural genetic engineer Agrobacterium tumefaciens C58.</title>
        <authorList>
            <person name="Wood D.W."/>
            <person name="Setubal J.C."/>
            <person name="Kaul R."/>
            <person name="Monks D.E."/>
            <person name="Kitajima J.P."/>
            <person name="Okura V.K."/>
            <person name="Zhou Y."/>
            <person name="Chen L."/>
            <person name="Wood G.E."/>
            <person name="Almeida N.F. Jr."/>
            <person name="Woo L."/>
            <person name="Chen Y."/>
            <person name="Paulsen I.T."/>
            <person name="Eisen J.A."/>
            <person name="Karp P.D."/>
            <person name="Bovee D. Sr."/>
            <person name="Chapman P."/>
            <person name="Clendenning J."/>
            <person name="Deatherage G."/>
            <person name="Gillet W."/>
            <person name="Grant C."/>
            <person name="Kutyavin T."/>
            <person name="Levy R."/>
            <person name="Li M.-J."/>
            <person name="McClelland E."/>
            <person name="Palmieri A."/>
            <person name="Raymond C."/>
            <person name="Rouse G."/>
            <person name="Saenphimmachak C."/>
            <person name="Wu Z."/>
            <person name="Romero P."/>
            <person name="Gordon D."/>
            <person name="Zhang S."/>
            <person name="Yoo H."/>
            <person name="Tao Y."/>
            <person name="Biddle P."/>
            <person name="Jung M."/>
            <person name="Krespan W."/>
            <person name="Perry M."/>
            <person name="Gordon-Kamm B."/>
            <person name="Liao L."/>
            <person name="Kim S."/>
            <person name="Hendrick C."/>
            <person name="Zhao Z.-Y."/>
            <person name="Dolan M."/>
            <person name="Chumley F."/>
            <person name="Tingey S.V."/>
            <person name="Tomb J.-F."/>
            <person name="Gordon M.P."/>
            <person name="Olson M.V."/>
            <person name="Nester E.W."/>
        </authorList>
    </citation>
    <scope>NUCLEOTIDE SEQUENCE [LARGE SCALE GENOMIC DNA]</scope>
    <source>
        <strain>C58 / ATCC 33970</strain>
    </source>
</reference>
<reference key="3">
    <citation type="journal article" date="2001" name="Science">
        <title>Genome sequence of the plant pathogen and biotechnology agent Agrobacterium tumefaciens C58.</title>
        <authorList>
            <person name="Goodner B."/>
            <person name="Hinkle G."/>
            <person name="Gattung S."/>
            <person name="Miller N."/>
            <person name="Blanchard M."/>
            <person name="Qurollo B."/>
            <person name="Goldman B.S."/>
            <person name="Cao Y."/>
            <person name="Askenazi M."/>
            <person name="Halling C."/>
            <person name="Mullin L."/>
            <person name="Houmiel K."/>
            <person name="Gordon J."/>
            <person name="Vaudin M."/>
            <person name="Iartchouk O."/>
            <person name="Epp A."/>
            <person name="Liu F."/>
            <person name="Wollam C."/>
            <person name="Allinger M."/>
            <person name="Doughty D."/>
            <person name="Scott C."/>
            <person name="Lappas C."/>
            <person name="Markelz B."/>
            <person name="Flanagan C."/>
            <person name="Crowell C."/>
            <person name="Gurson J."/>
            <person name="Lomo C."/>
            <person name="Sear C."/>
            <person name="Strub G."/>
            <person name="Cielo C."/>
            <person name="Slater S."/>
        </authorList>
    </citation>
    <scope>NUCLEOTIDE SEQUENCE [LARGE SCALE GENOMIC DNA]</scope>
    <source>
        <strain>C58 / ATCC 33970</strain>
    </source>
</reference>
<accession>Q44342</accession>
<protein>
    <recommendedName>
        <fullName>Flagellar L-ring protein</fullName>
    </recommendedName>
    <alternativeName>
        <fullName>Basal body L-ring protein</fullName>
    </alternativeName>
</protein>
<sequence>MSTRRLPALLLPLALLAGCQNNQTLKEIGNAPAMSPIGSGLQFSQTPQMGMYPKQPKHMASGYSLWSDSQGALFKDLRALNIGDILTVNIQINDKADFDNETERNRTNASGLNWKAKAQILGWTPDADSSIKYGSDTDTQAKGKTKRSEKLTLLVAAVVTGILENGNLIISGSQEVRVNHEIRILNVGGIVRPQDVDAQNIISYERIAEARISYGGRGRLTEVQQPPVGQQVVDLFSPL</sequence>
<organism>
    <name type="scientific">Agrobacterium fabrum (strain C58 / ATCC 33970)</name>
    <name type="common">Agrobacterium tumefaciens (strain C58)</name>
    <dbReference type="NCBI Taxonomy" id="176299"/>
    <lineage>
        <taxon>Bacteria</taxon>
        <taxon>Pseudomonadati</taxon>
        <taxon>Pseudomonadota</taxon>
        <taxon>Alphaproteobacteria</taxon>
        <taxon>Hyphomicrobiales</taxon>
        <taxon>Rhizobiaceae</taxon>
        <taxon>Rhizobium/Agrobacterium group</taxon>
        <taxon>Agrobacterium</taxon>
        <taxon>Agrobacterium tumefaciens complex</taxon>
    </lineage>
</organism>
<feature type="signal peptide" evidence="2">
    <location>
        <begin position="1"/>
        <end position="18"/>
    </location>
</feature>
<feature type="chain" id="PRO_0000009421" description="Flagellar L-ring protein">
    <location>
        <begin position="19"/>
        <end position="239"/>
    </location>
</feature>
<feature type="lipid moiety-binding region" description="N-palmitoyl cysteine" evidence="3">
    <location>
        <position position="19"/>
    </location>
</feature>
<feature type="lipid moiety-binding region" description="S-diacylglycerol cysteine" evidence="3">
    <location>
        <position position="19"/>
    </location>
</feature>
<keyword id="KW-0975">Bacterial flagellum</keyword>
<keyword id="KW-0998">Cell outer membrane</keyword>
<keyword id="KW-0449">Lipoprotein</keyword>
<keyword id="KW-0472">Membrane</keyword>
<keyword id="KW-0564">Palmitate</keyword>
<keyword id="KW-1185">Reference proteome</keyword>
<keyword id="KW-0732">Signal</keyword>